<name>PP146_ARATH</name>
<organism>
    <name type="scientific">Arabidopsis thaliana</name>
    <name type="common">Mouse-ear cress</name>
    <dbReference type="NCBI Taxonomy" id="3702"/>
    <lineage>
        <taxon>Eukaryota</taxon>
        <taxon>Viridiplantae</taxon>
        <taxon>Streptophyta</taxon>
        <taxon>Embryophyta</taxon>
        <taxon>Tracheophyta</taxon>
        <taxon>Spermatophyta</taxon>
        <taxon>Magnoliopsida</taxon>
        <taxon>eudicotyledons</taxon>
        <taxon>Gunneridae</taxon>
        <taxon>Pentapetalae</taxon>
        <taxon>rosids</taxon>
        <taxon>malvids</taxon>
        <taxon>Brassicales</taxon>
        <taxon>Brassicaceae</taxon>
        <taxon>Camelineae</taxon>
        <taxon>Arabidopsis</taxon>
    </lineage>
</organism>
<proteinExistence type="inferred from homology"/>
<reference key="1">
    <citation type="journal article" date="1999" name="Nature">
        <title>Sequence and analysis of chromosome 2 of the plant Arabidopsis thaliana.</title>
        <authorList>
            <person name="Lin X."/>
            <person name="Kaul S."/>
            <person name="Rounsley S.D."/>
            <person name="Shea T.P."/>
            <person name="Benito M.-I."/>
            <person name="Town C.D."/>
            <person name="Fujii C.Y."/>
            <person name="Mason T.M."/>
            <person name="Bowman C.L."/>
            <person name="Barnstead M.E."/>
            <person name="Feldblyum T.V."/>
            <person name="Buell C.R."/>
            <person name="Ketchum K.A."/>
            <person name="Lee J.J."/>
            <person name="Ronning C.M."/>
            <person name="Koo H.L."/>
            <person name="Moffat K.S."/>
            <person name="Cronin L.A."/>
            <person name="Shen M."/>
            <person name="Pai G."/>
            <person name="Van Aken S."/>
            <person name="Umayam L."/>
            <person name="Tallon L.J."/>
            <person name="Gill J.E."/>
            <person name="Adams M.D."/>
            <person name="Carrera A.J."/>
            <person name="Creasy T.H."/>
            <person name="Goodman H.M."/>
            <person name="Somerville C.R."/>
            <person name="Copenhaver G.P."/>
            <person name="Preuss D."/>
            <person name="Nierman W.C."/>
            <person name="White O."/>
            <person name="Eisen J.A."/>
            <person name="Salzberg S.L."/>
            <person name="Fraser C.M."/>
            <person name="Venter J.C."/>
        </authorList>
    </citation>
    <scope>NUCLEOTIDE SEQUENCE [LARGE SCALE GENOMIC DNA]</scope>
    <source>
        <strain>cv. Columbia</strain>
    </source>
</reference>
<reference key="2">
    <citation type="journal article" date="2017" name="Plant J.">
        <title>Araport11: a complete reannotation of the Arabidopsis thaliana reference genome.</title>
        <authorList>
            <person name="Cheng C.Y."/>
            <person name="Krishnakumar V."/>
            <person name="Chan A.P."/>
            <person name="Thibaud-Nissen F."/>
            <person name="Schobel S."/>
            <person name="Town C.D."/>
        </authorList>
    </citation>
    <scope>GENOME REANNOTATION</scope>
    <source>
        <strain>cv. Columbia</strain>
    </source>
</reference>
<reference key="3">
    <citation type="journal article" date="2000" name="Plant Mol. Biol.">
        <title>In Arabidopsis thaliana, 1% of the genome codes for a novel protein family unique to plants.</title>
        <authorList>
            <person name="Aubourg S."/>
            <person name="Boudet N."/>
            <person name="Kreis M."/>
            <person name="Lecharny A."/>
        </authorList>
    </citation>
    <scope>GENE FAMILY</scope>
</reference>
<reference key="4">
    <citation type="journal article" date="2004" name="Plant Cell">
        <title>Genome-wide analysis of Arabidopsis pentatricopeptide repeat proteins reveals their essential role in organelle biogenesis.</title>
        <authorList>
            <person name="Lurin C."/>
            <person name="Andres C."/>
            <person name="Aubourg S."/>
            <person name="Bellaoui M."/>
            <person name="Bitton F."/>
            <person name="Bruyere C."/>
            <person name="Caboche M."/>
            <person name="Debast C."/>
            <person name="Gualberto J."/>
            <person name="Hoffmann B."/>
            <person name="Lecharny A."/>
            <person name="Le Ret M."/>
            <person name="Martin-Magniette M.-L."/>
            <person name="Mireau H."/>
            <person name="Peeters N."/>
            <person name="Renou J.-P."/>
            <person name="Szurek B."/>
            <person name="Taconnat L."/>
            <person name="Small I."/>
        </authorList>
    </citation>
    <scope>GENE FAMILY</scope>
</reference>
<feature type="transit peptide" description="Mitochondrion" evidence="1">
    <location>
        <begin position="1"/>
        <end position="12"/>
    </location>
</feature>
<feature type="chain" id="PRO_0000356006" description="Pentatricopeptide repeat-containing protein At2g03380, mitochondrial">
    <location>
        <begin position="13"/>
        <end position="689"/>
    </location>
</feature>
<feature type="repeat" description="PPR 1">
    <location>
        <begin position="75"/>
        <end position="105"/>
    </location>
</feature>
<feature type="repeat" description="PPR 2">
    <location>
        <begin position="106"/>
        <end position="140"/>
    </location>
</feature>
<feature type="repeat" description="PPR 3">
    <location>
        <begin position="141"/>
        <end position="171"/>
    </location>
</feature>
<feature type="repeat" description="PPR 4">
    <location>
        <begin position="175"/>
        <end position="205"/>
    </location>
</feature>
<feature type="repeat" description="PPR 5">
    <location>
        <begin position="206"/>
        <end position="240"/>
    </location>
</feature>
<feature type="repeat" description="PPR 6">
    <location>
        <begin position="241"/>
        <end position="275"/>
    </location>
</feature>
<feature type="repeat" description="PPR 7">
    <location>
        <begin position="276"/>
        <end position="306"/>
    </location>
</feature>
<feature type="repeat" description="PPR 8">
    <location>
        <begin position="307"/>
        <end position="341"/>
    </location>
</feature>
<feature type="repeat" description="PPR 9">
    <location>
        <begin position="342"/>
        <end position="372"/>
    </location>
</feature>
<feature type="repeat" description="PPR 10">
    <location>
        <begin position="376"/>
        <end position="406"/>
    </location>
</feature>
<feature type="repeat" description="PPR 11">
    <location>
        <begin position="407"/>
        <end position="441"/>
    </location>
</feature>
<feature type="repeat" description="PPR 12">
    <location>
        <begin position="442"/>
        <end position="476"/>
    </location>
</feature>
<feature type="repeat" description="PPR 13">
    <location>
        <begin position="479"/>
        <end position="509"/>
    </location>
</feature>
<feature type="repeat" description="PPR 14">
    <location>
        <begin position="510"/>
        <end position="544"/>
    </location>
</feature>
<feature type="repeat" description="PPR 15">
    <location>
        <begin position="545"/>
        <end position="580"/>
    </location>
</feature>
<feature type="repeat" description="PPR 16">
    <location>
        <begin position="581"/>
        <end position="611"/>
    </location>
</feature>
<feature type="region of interest" description="Type E motif; degenerate">
    <location>
        <begin position="616"/>
        <end position="689"/>
    </location>
</feature>
<protein>
    <recommendedName>
        <fullName>Pentatricopeptide repeat-containing protein At2g03380, mitochondrial</fullName>
    </recommendedName>
</protein>
<keyword id="KW-0496">Mitochondrion</keyword>
<keyword id="KW-1185">Reference proteome</keyword>
<keyword id="KW-0677">Repeat</keyword>
<keyword id="KW-0809">Transit peptide</keyword>
<comment type="subcellular location">
    <subcellularLocation>
        <location evidence="2">Mitochondrion</location>
    </subcellularLocation>
</comment>
<comment type="similarity">
    <text evidence="2">Belongs to the PPR family. PCMP-E subfamily.</text>
</comment>
<comment type="online information" name="Pentatricopeptide repeat proteins">
    <link uri="https://ppr.plantenergy.uwa.edu.au"/>
</comment>
<evidence type="ECO:0000255" key="1"/>
<evidence type="ECO:0000305" key="2"/>
<gene>
    <name type="primary">PCMP-E47</name>
    <name type="ordered locus">At2g03380</name>
    <name type="ORF">T4M8.19</name>
</gene>
<sequence>MLRSITLSPTRRFGFPPRCVSFTTIKELILTEENDGSSLHYAASSPCFLLLSKCTNIDSLRQSHGVLTGNGLMGDISIATKLVSLYGFFGYTKDARLVFDQIPEPDFYLWKVMLRCYCLNKESVEVVKLYDLLMKHGFRYDDIVFSKALKACTELQDLDNGKKIHCQLVKVPSFDNVVLTGLLDMYAKCGEIKSAHKVFNDITLRNVVCWTSMIAGYVKNDLCEEGLVLFNRMRENNVLGNEYTYGTLIMACTKLSALHQGKWFHGCLVKSGIELSSCLVTSLLDMYVKCGDISNARRVFNEHSHVDLVMWTAMIVGYTHNGSVNEALSLFQKMKGVEIKPNCVTIASVLSGCGLIENLELGRSVHGLSIKVGIWDTNVANALVHMYAKCYQNRDAKYVFEMESEKDIVAWNSIISGFSQNGSIHEALFLFHRMNSESVTPNGVTVASLFSACASLGSLAVGSSLHAYSVKLGFLASSSVHVGTALLDFYAKCGDPQSARLIFDTIEEKNTITWSAMIGGYGKQGDTIGSLELFEEMLKKQQKPNESTFTSILSACGHTGMVNEGKKYFSSMYKDYNFTPSTKHYTCMVDMLARAGELEQALDIIEKMPIQPDVRCFGAFLHGCGMHSRFDLGEIVIKKMLDLHPDDASYYVLVSNLYASDGRWNQAKEVRNLMKQRGLSKIAGHSTME</sequence>
<accession>Q9ZQ74</accession>
<dbReference type="EMBL" id="AC006284">
    <property type="protein sequence ID" value="AAD17437.1"/>
    <property type="molecule type" value="Genomic_DNA"/>
</dbReference>
<dbReference type="EMBL" id="CP002685">
    <property type="protein sequence ID" value="AEC05694.1"/>
    <property type="molecule type" value="Genomic_DNA"/>
</dbReference>
<dbReference type="PIR" id="G84447">
    <property type="entry name" value="G84447"/>
</dbReference>
<dbReference type="RefSeq" id="NP_178437.1">
    <property type="nucleotide sequence ID" value="NM_126389.2"/>
</dbReference>
<dbReference type="SMR" id="Q9ZQ74"/>
<dbReference type="FunCoup" id="Q9ZQ74">
    <property type="interactions" value="114"/>
</dbReference>
<dbReference type="iPTMnet" id="Q9ZQ74"/>
<dbReference type="PaxDb" id="3702-AT2G03380.1"/>
<dbReference type="ProteomicsDB" id="250494"/>
<dbReference type="EnsemblPlants" id="AT2G03380.1">
    <property type="protein sequence ID" value="AT2G03380.1"/>
    <property type="gene ID" value="AT2G03380"/>
</dbReference>
<dbReference type="GeneID" id="814867"/>
<dbReference type="Gramene" id="AT2G03380.1">
    <property type="protein sequence ID" value="AT2G03380.1"/>
    <property type="gene ID" value="AT2G03380"/>
</dbReference>
<dbReference type="KEGG" id="ath:AT2G03380"/>
<dbReference type="Araport" id="AT2G03380"/>
<dbReference type="TAIR" id="AT2G03380">
    <property type="gene designation" value="PPR96"/>
</dbReference>
<dbReference type="eggNOG" id="KOG4197">
    <property type="taxonomic scope" value="Eukaryota"/>
</dbReference>
<dbReference type="HOGENOM" id="CLU_002706_0_6_1"/>
<dbReference type="InParanoid" id="Q9ZQ74"/>
<dbReference type="OMA" id="YAKCHMI"/>
<dbReference type="PhylomeDB" id="Q9ZQ74"/>
<dbReference type="PRO" id="PR:Q9ZQ74"/>
<dbReference type="Proteomes" id="UP000006548">
    <property type="component" value="Chromosome 2"/>
</dbReference>
<dbReference type="ExpressionAtlas" id="Q9ZQ74">
    <property type="expression patterns" value="baseline and differential"/>
</dbReference>
<dbReference type="GO" id="GO:0005739">
    <property type="term" value="C:mitochondrion"/>
    <property type="evidence" value="ECO:0000314"/>
    <property type="project" value="TAIR"/>
</dbReference>
<dbReference type="GO" id="GO:0003723">
    <property type="term" value="F:RNA binding"/>
    <property type="evidence" value="ECO:0007669"/>
    <property type="project" value="InterPro"/>
</dbReference>
<dbReference type="GO" id="GO:0009737">
    <property type="term" value="P:response to abscisic acid"/>
    <property type="evidence" value="ECO:0000315"/>
    <property type="project" value="TAIR"/>
</dbReference>
<dbReference type="GO" id="GO:0006979">
    <property type="term" value="P:response to oxidative stress"/>
    <property type="evidence" value="ECO:0000315"/>
    <property type="project" value="TAIR"/>
</dbReference>
<dbReference type="GO" id="GO:0009651">
    <property type="term" value="P:response to salt stress"/>
    <property type="evidence" value="ECO:0000315"/>
    <property type="project" value="TAIR"/>
</dbReference>
<dbReference type="GO" id="GO:0009451">
    <property type="term" value="P:RNA modification"/>
    <property type="evidence" value="ECO:0007669"/>
    <property type="project" value="InterPro"/>
</dbReference>
<dbReference type="FunFam" id="1.25.40.10:FF:000212">
    <property type="entry name" value="Pentatricopeptide repeat-containing protein At2g03380, mitochondrial"/>
    <property type="match status" value="1"/>
</dbReference>
<dbReference type="FunFam" id="1.25.40.10:FF:001180">
    <property type="entry name" value="Pentatricopeptide repeat-containing protein At2g03380, mitochondrial"/>
    <property type="match status" value="1"/>
</dbReference>
<dbReference type="FunFam" id="1.25.40.10:FF:000948">
    <property type="entry name" value="Pentatricopeptide repeat-containing protein mitochondrial"/>
    <property type="match status" value="2"/>
</dbReference>
<dbReference type="FunFam" id="1.25.40.10:FF:000309">
    <property type="entry name" value="Pentatricopeptide repeat-containing protein, chloroplastic"/>
    <property type="match status" value="1"/>
</dbReference>
<dbReference type="Gene3D" id="1.25.40.10">
    <property type="entry name" value="Tetratricopeptide repeat domain"/>
    <property type="match status" value="5"/>
</dbReference>
<dbReference type="InterPro" id="IPR046848">
    <property type="entry name" value="E_motif"/>
</dbReference>
<dbReference type="InterPro" id="IPR002885">
    <property type="entry name" value="Pentatricopeptide_rpt"/>
</dbReference>
<dbReference type="InterPro" id="IPR046960">
    <property type="entry name" value="PPR_At4g14850-like_plant"/>
</dbReference>
<dbReference type="InterPro" id="IPR011990">
    <property type="entry name" value="TPR-like_helical_dom_sf"/>
</dbReference>
<dbReference type="NCBIfam" id="TIGR00756">
    <property type="entry name" value="PPR"/>
    <property type="match status" value="7"/>
</dbReference>
<dbReference type="PANTHER" id="PTHR24015:SF1951">
    <property type="entry name" value="OS06G0185700 PROTEIN"/>
    <property type="match status" value="1"/>
</dbReference>
<dbReference type="PANTHER" id="PTHR24015">
    <property type="entry name" value="OS07G0578800 PROTEIN-RELATED"/>
    <property type="match status" value="1"/>
</dbReference>
<dbReference type="Pfam" id="PF20431">
    <property type="entry name" value="E_motif"/>
    <property type="match status" value="1"/>
</dbReference>
<dbReference type="Pfam" id="PF01535">
    <property type="entry name" value="PPR"/>
    <property type="match status" value="4"/>
</dbReference>
<dbReference type="Pfam" id="PF13041">
    <property type="entry name" value="PPR_2"/>
    <property type="match status" value="4"/>
</dbReference>
<dbReference type="PROSITE" id="PS51375">
    <property type="entry name" value="PPR"/>
    <property type="match status" value="16"/>
</dbReference>